<accession>A1XGL7</accession>
<geneLocation type="chloroplast"/>
<sequence length="123" mass="13736">MPTIKQLIRNTRQPIKNVTKSPALRGCPQRRGTCTRVYTITPKKPNSALRKVARVRLTSGFEITAYIPGIGHNLQEHSVVLVRGGRVKDLPGVRYHIVRGTLDAVGVKDRQQGRSKYGVKKPK</sequence>
<proteinExistence type="inferred from homology"/>
<reference key="1">
    <citation type="journal article" date="2007" name="BMC Genomics">
        <title>Comparative chloroplast genomics: analyses including new sequences from the angiosperms Nuphar advena and Ranunculus macranthus.</title>
        <authorList>
            <person name="Raubeson L.A."/>
            <person name="Peery R."/>
            <person name="Chumley T.W."/>
            <person name="Dziubek C."/>
            <person name="Fourcade H.M."/>
            <person name="Boore J.L."/>
            <person name="Jansen R.K."/>
        </authorList>
    </citation>
    <scope>NUCLEOTIDE SEQUENCE [LARGE SCALE GENOMIC DNA]</scope>
</reference>
<protein>
    <recommendedName>
        <fullName evidence="2">Small ribosomal subunit protein uS12cz/uS12cy</fullName>
    </recommendedName>
    <alternativeName>
        <fullName evidence="3">30S ribosomal protein S12, chloroplastic</fullName>
    </alternativeName>
</protein>
<dbReference type="EMBL" id="DQ359689">
    <property type="protein sequence ID" value="ABC70780.1"/>
    <property type="molecule type" value="Genomic_DNA"/>
</dbReference>
<dbReference type="EMBL" id="DQ359689">
    <property type="protein sequence ID" value="ABC70818.1"/>
    <property type="molecule type" value="Genomic_DNA"/>
</dbReference>
<dbReference type="SMR" id="A1XGL7"/>
<dbReference type="GO" id="GO:0009507">
    <property type="term" value="C:chloroplast"/>
    <property type="evidence" value="ECO:0007669"/>
    <property type="project" value="UniProtKB-SubCell"/>
</dbReference>
<dbReference type="GO" id="GO:0015935">
    <property type="term" value="C:small ribosomal subunit"/>
    <property type="evidence" value="ECO:0007669"/>
    <property type="project" value="InterPro"/>
</dbReference>
<dbReference type="GO" id="GO:0019843">
    <property type="term" value="F:rRNA binding"/>
    <property type="evidence" value="ECO:0007669"/>
    <property type="project" value="UniProtKB-UniRule"/>
</dbReference>
<dbReference type="GO" id="GO:0003735">
    <property type="term" value="F:structural constituent of ribosome"/>
    <property type="evidence" value="ECO:0007669"/>
    <property type="project" value="InterPro"/>
</dbReference>
<dbReference type="GO" id="GO:0006412">
    <property type="term" value="P:translation"/>
    <property type="evidence" value="ECO:0007669"/>
    <property type="project" value="UniProtKB-UniRule"/>
</dbReference>
<dbReference type="CDD" id="cd03368">
    <property type="entry name" value="Ribosomal_S12"/>
    <property type="match status" value="1"/>
</dbReference>
<dbReference type="FunFam" id="2.40.50.140:FF:000008">
    <property type="entry name" value="30S ribosomal protein S12, chloroplastic"/>
    <property type="match status" value="1"/>
</dbReference>
<dbReference type="Gene3D" id="2.40.50.140">
    <property type="entry name" value="Nucleic acid-binding proteins"/>
    <property type="match status" value="1"/>
</dbReference>
<dbReference type="HAMAP" id="MF_00403_B">
    <property type="entry name" value="Ribosomal_uS12_B"/>
    <property type="match status" value="1"/>
</dbReference>
<dbReference type="InterPro" id="IPR012340">
    <property type="entry name" value="NA-bd_OB-fold"/>
</dbReference>
<dbReference type="InterPro" id="IPR006032">
    <property type="entry name" value="Ribosomal_uS12"/>
</dbReference>
<dbReference type="InterPro" id="IPR005679">
    <property type="entry name" value="Ribosomal_uS12_bac"/>
</dbReference>
<dbReference type="NCBIfam" id="TIGR00981">
    <property type="entry name" value="rpsL_bact"/>
    <property type="match status" value="1"/>
</dbReference>
<dbReference type="PANTHER" id="PTHR11652">
    <property type="entry name" value="30S RIBOSOMAL PROTEIN S12 FAMILY MEMBER"/>
    <property type="match status" value="1"/>
</dbReference>
<dbReference type="Pfam" id="PF00164">
    <property type="entry name" value="Ribosom_S12_S23"/>
    <property type="match status" value="1"/>
</dbReference>
<dbReference type="PIRSF" id="PIRSF002133">
    <property type="entry name" value="Ribosomal_S12/S23"/>
    <property type="match status" value="1"/>
</dbReference>
<dbReference type="PRINTS" id="PR01034">
    <property type="entry name" value="RIBOSOMALS12"/>
</dbReference>
<dbReference type="SUPFAM" id="SSF50249">
    <property type="entry name" value="Nucleic acid-binding proteins"/>
    <property type="match status" value="1"/>
</dbReference>
<dbReference type="PROSITE" id="PS00055">
    <property type="entry name" value="RIBOSOMAL_S12"/>
    <property type="match status" value="1"/>
</dbReference>
<evidence type="ECO:0000250" key="1"/>
<evidence type="ECO:0000255" key="2">
    <source>
        <dbReference type="HAMAP-Rule" id="MF_00403"/>
    </source>
</evidence>
<evidence type="ECO:0000305" key="3"/>
<gene>
    <name type="primary">rps12-A</name>
</gene>
<gene>
    <name type="primary">rps12-B</name>
</gene>
<keyword id="KW-0150">Chloroplast</keyword>
<keyword id="KW-0934">Plastid</keyword>
<keyword id="KW-0687">Ribonucleoprotein</keyword>
<keyword id="KW-0689">Ribosomal protein</keyword>
<keyword id="KW-0694">RNA-binding</keyword>
<keyword id="KW-0699">rRNA-binding</keyword>
<comment type="function">
    <text evidence="1">With S4 and S5 plays an important role in translational accuracy. Located at the interface of the 30S and 50S subunits (By similarity).</text>
</comment>
<comment type="subunit">
    <text evidence="1">Part of the 30S ribosomal subunit.</text>
</comment>
<comment type="subcellular location">
    <subcellularLocation>
        <location>Plastid</location>
        <location>Chloroplast</location>
    </subcellularLocation>
</comment>
<comment type="similarity">
    <text evidence="3">Belongs to the universal ribosomal protein uS12 family.</text>
</comment>
<feature type="chain" id="PRO_0000296080" description="Small ribosomal subunit protein uS12cz/uS12cy">
    <location>
        <begin position="1"/>
        <end position="123"/>
    </location>
</feature>
<organism>
    <name type="scientific">Ranunculus macranthus</name>
    <name type="common">Large buttercup</name>
    <dbReference type="NCBI Taxonomy" id="334596"/>
    <lineage>
        <taxon>Eukaryota</taxon>
        <taxon>Viridiplantae</taxon>
        <taxon>Streptophyta</taxon>
        <taxon>Embryophyta</taxon>
        <taxon>Tracheophyta</taxon>
        <taxon>Spermatophyta</taxon>
        <taxon>Magnoliopsida</taxon>
        <taxon>Ranunculales</taxon>
        <taxon>Ranunculaceae</taxon>
        <taxon>Ranunculoideae</taxon>
        <taxon>Ranunculeae</taxon>
        <taxon>Ranunculus</taxon>
    </lineage>
</organism>
<name>RR12_RANMC</name>